<evidence type="ECO:0000250" key="1"/>
<evidence type="ECO:0000255" key="2"/>
<evidence type="ECO:0000305" key="3"/>
<name>C88A1_MAIZE</name>
<protein>
    <recommendedName>
        <fullName>Cytochrome P450 88A1</fullName>
        <ecNumber>1.14.-.-</ecNumber>
    </recommendedName>
    <alternativeName>
        <fullName>Dwarf3 protein</fullName>
    </alternativeName>
</protein>
<feature type="chain" id="PRO_0000052177" description="Cytochrome P450 88A1">
    <location>
        <begin position="1"/>
        <end position="519"/>
    </location>
</feature>
<feature type="transmembrane region" description="Helical" evidence="2">
    <location>
        <begin position="1"/>
        <end position="21"/>
    </location>
</feature>
<feature type="binding site" description="axial binding residue" evidence="1">
    <location>
        <position position="466"/>
    </location>
    <ligand>
        <name>heme</name>
        <dbReference type="ChEBI" id="CHEBI:30413"/>
    </ligand>
    <ligandPart>
        <name>Fe</name>
        <dbReference type="ChEBI" id="CHEBI:18248"/>
    </ligandPart>
</feature>
<proteinExistence type="evidence at transcript level"/>
<organism>
    <name type="scientific">Zea mays</name>
    <name type="common">Maize</name>
    <dbReference type="NCBI Taxonomy" id="4577"/>
    <lineage>
        <taxon>Eukaryota</taxon>
        <taxon>Viridiplantae</taxon>
        <taxon>Streptophyta</taxon>
        <taxon>Embryophyta</taxon>
        <taxon>Tracheophyta</taxon>
        <taxon>Spermatophyta</taxon>
        <taxon>Magnoliopsida</taxon>
        <taxon>Liliopsida</taxon>
        <taxon>Poales</taxon>
        <taxon>Poaceae</taxon>
        <taxon>PACMAD clade</taxon>
        <taxon>Panicoideae</taxon>
        <taxon>Andropogonodae</taxon>
        <taxon>Andropogoneae</taxon>
        <taxon>Tripsacinae</taxon>
        <taxon>Zea</taxon>
    </lineage>
</organism>
<keyword id="KW-0349">Heme</keyword>
<keyword id="KW-0408">Iron</keyword>
<keyword id="KW-0472">Membrane</keyword>
<keyword id="KW-0479">Metal-binding</keyword>
<keyword id="KW-0503">Monooxygenase</keyword>
<keyword id="KW-0560">Oxidoreductase</keyword>
<keyword id="KW-1185">Reference proteome</keyword>
<keyword id="KW-0812">Transmembrane</keyword>
<keyword id="KW-1133">Transmembrane helix</keyword>
<comment type="cofactor">
    <cofactor evidence="1">
        <name>heme</name>
        <dbReference type="ChEBI" id="CHEBI:30413"/>
    </cofactor>
</comment>
<comment type="pathway">
    <text>Plant hormone biosynthesis; gibberellin biosynthesis.</text>
</comment>
<comment type="subcellular location">
    <subcellularLocation>
        <location evidence="3">Membrane</location>
        <topology evidence="3">Single-pass membrane protein</topology>
    </subcellularLocation>
</comment>
<comment type="tissue specificity">
    <text>Expressed in roots, developing leaves, the vegetative meristem, and suspension culture cells.</text>
</comment>
<comment type="similarity">
    <text evidence="3">Belongs to the cytochrome P450 family.</text>
</comment>
<sequence>MLGVGMAAAVLLGAVALLLADAAARRAHWWYREAAEAVLVGAVALVVVDAAARRAHGWYREAALGAARRARLPPGEMGWPLVGGMWAFLRAFKSGKPDAFIASFVRRFGRTGVYRSFMFSSPTVLVTTAEGCKQVLMDDDAFVTGWPKATVALVGPRSFVAMPYDEHRRIRKLTAAPINGFDALTGYLPFIDRTVTSSLRAWADHGGSVEFLTELRRMTFKIIVQIFLGGADQATTRALERSYTELNYGMRAMAINLPGFAYRGALRARRRLVAVLQGVLDERRAARAKGVSGGGVDMMDRLIEAQDERGRHLDDDEIIDVLVMYLNAGHESSGHITMWATVFLQENPDMFARAKAEQEAIMRSIPSSQRGLTLRDFRKMEYLSQVIDETLRLVNISFVSFRQATRDVFVNGYLIPKGWKVQLWYRSVHMDPQVYPDPTKFDPSRWEGHSPRAGTFLAFGLGARLCPGNDLAKLEISVFLHHFLLGYKLARTNPRCRVRYLPHPRPVDNCLAKITRVGS</sequence>
<reference key="1">
    <citation type="journal article" date="1995" name="Plant Cell">
        <title>The maize Dwarf3 gene encodes a cytochrome P450-mediated early step in Gibberellin biosynthesis.</title>
        <authorList>
            <person name="Winkler R.G."/>
            <person name="Helentjaris T."/>
        </authorList>
    </citation>
    <scope>NUCLEOTIDE SEQUENCE [MRNA]</scope>
    <source>
        <strain>cv. B73</strain>
    </source>
</reference>
<gene>
    <name type="primary">CYP88A1</name>
    <name type="synonym">D3</name>
</gene>
<accession>Q43246</accession>
<dbReference type="EC" id="1.14.-.-"/>
<dbReference type="EMBL" id="U32579">
    <property type="protein sequence ID" value="AAC49067.1"/>
    <property type="molecule type" value="mRNA"/>
</dbReference>
<dbReference type="PIR" id="T02263">
    <property type="entry name" value="T02263"/>
</dbReference>
<dbReference type="RefSeq" id="NP_001105586.1">
    <property type="nucleotide sequence ID" value="NM_001112116.1"/>
</dbReference>
<dbReference type="SMR" id="Q43246"/>
<dbReference type="FunCoup" id="Q43246">
    <property type="interactions" value="238"/>
</dbReference>
<dbReference type="STRING" id="4577.Q43246"/>
<dbReference type="PaxDb" id="4577-GRMZM2G093195_P01"/>
<dbReference type="EnsemblPlants" id="Zm00001eb379120_T002">
    <property type="protein sequence ID" value="Zm00001eb379120_P002"/>
    <property type="gene ID" value="Zm00001eb379120"/>
</dbReference>
<dbReference type="GeneID" id="542580"/>
<dbReference type="Gramene" id="Zm00001eb379120_T002">
    <property type="protein sequence ID" value="Zm00001eb379120_P002"/>
    <property type="gene ID" value="Zm00001eb379120"/>
</dbReference>
<dbReference type="KEGG" id="zma:542580"/>
<dbReference type="eggNOG" id="KOG0157">
    <property type="taxonomic scope" value="Eukaryota"/>
</dbReference>
<dbReference type="HOGENOM" id="CLU_001570_15_5_1"/>
<dbReference type="InParanoid" id="Q43246"/>
<dbReference type="OrthoDB" id="1470350at2759"/>
<dbReference type="UniPathway" id="UPA00390"/>
<dbReference type="Proteomes" id="UP000007305">
    <property type="component" value="Chromosome 9"/>
</dbReference>
<dbReference type="ExpressionAtlas" id="Q43246">
    <property type="expression patterns" value="baseline and differential"/>
</dbReference>
<dbReference type="GO" id="GO:0005783">
    <property type="term" value="C:endoplasmic reticulum"/>
    <property type="evidence" value="ECO:0000318"/>
    <property type="project" value="GO_Central"/>
</dbReference>
<dbReference type="GO" id="GO:0016020">
    <property type="term" value="C:membrane"/>
    <property type="evidence" value="ECO:0007669"/>
    <property type="project" value="UniProtKB-SubCell"/>
</dbReference>
<dbReference type="GO" id="GO:0051777">
    <property type="term" value="F:ent-kaurenoic acid monooxygenase activity"/>
    <property type="evidence" value="ECO:0000318"/>
    <property type="project" value="GO_Central"/>
</dbReference>
<dbReference type="GO" id="GO:0020037">
    <property type="term" value="F:heme binding"/>
    <property type="evidence" value="ECO:0007669"/>
    <property type="project" value="InterPro"/>
</dbReference>
<dbReference type="GO" id="GO:0005506">
    <property type="term" value="F:iron ion binding"/>
    <property type="evidence" value="ECO:0007669"/>
    <property type="project" value="InterPro"/>
</dbReference>
<dbReference type="GO" id="GO:0009686">
    <property type="term" value="P:gibberellin biosynthetic process"/>
    <property type="evidence" value="ECO:0007669"/>
    <property type="project" value="UniProtKB-UniPathway"/>
</dbReference>
<dbReference type="GO" id="GO:0048868">
    <property type="term" value="P:pollen tube development"/>
    <property type="evidence" value="ECO:0000318"/>
    <property type="project" value="GO_Central"/>
</dbReference>
<dbReference type="FunFam" id="1.10.630.10:FF:000052">
    <property type="entry name" value="Ent-kaurenoic acid oxidase"/>
    <property type="match status" value="1"/>
</dbReference>
<dbReference type="Gene3D" id="1.10.630.10">
    <property type="entry name" value="Cytochrome P450"/>
    <property type="match status" value="1"/>
</dbReference>
<dbReference type="InterPro" id="IPR001128">
    <property type="entry name" value="Cyt_P450"/>
</dbReference>
<dbReference type="InterPro" id="IPR002397">
    <property type="entry name" value="Cyt_P450_B"/>
</dbReference>
<dbReference type="InterPro" id="IPR017972">
    <property type="entry name" value="Cyt_P450_CS"/>
</dbReference>
<dbReference type="InterPro" id="IPR036396">
    <property type="entry name" value="Cyt_P450_sf"/>
</dbReference>
<dbReference type="PANTHER" id="PTHR24286">
    <property type="entry name" value="CYTOCHROME P450 26"/>
    <property type="match status" value="1"/>
</dbReference>
<dbReference type="PANTHER" id="PTHR24286:SF356">
    <property type="entry name" value="ENT-KAURENOIC ACID OXIDASE 2"/>
    <property type="match status" value="1"/>
</dbReference>
<dbReference type="Pfam" id="PF00067">
    <property type="entry name" value="p450"/>
    <property type="match status" value="1"/>
</dbReference>
<dbReference type="PRINTS" id="PR00359">
    <property type="entry name" value="BP450"/>
</dbReference>
<dbReference type="PRINTS" id="PR00385">
    <property type="entry name" value="P450"/>
</dbReference>
<dbReference type="SUPFAM" id="SSF48264">
    <property type="entry name" value="Cytochrome P450"/>
    <property type="match status" value="1"/>
</dbReference>
<dbReference type="PROSITE" id="PS00086">
    <property type="entry name" value="CYTOCHROME_P450"/>
    <property type="match status" value="1"/>
</dbReference>